<name>GCH4_COLP3</name>
<protein>
    <recommendedName>
        <fullName evidence="1">GTP cyclohydrolase FolE2</fullName>
        <ecNumber evidence="1">3.5.4.16</ecNumber>
    </recommendedName>
</protein>
<keyword id="KW-0378">Hydrolase</keyword>
<gene>
    <name evidence="1" type="primary">folE2</name>
    <name type="ordered locus">CPS_4498</name>
</gene>
<evidence type="ECO:0000255" key="1">
    <source>
        <dbReference type="HAMAP-Rule" id="MF_01527"/>
    </source>
</evidence>
<organism>
    <name type="scientific">Colwellia psychrerythraea (strain 34H / ATCC BAA-681)</name>
    <name type="common">Vibrio psychroerythus</name>
    <dbReference type="NCBI Taxonomy" id="167879"/>
    <lineage>
        <taxon>Bacteria</taxon>
        <taxon>Pseudomonadati</taxon>
        <taxon>Pseudomonadota</taxon>
        <taxon>Gammaproteobacteria</taxon>
        <taxon>Alteromonadales</taxon>
        <taxon>Colwelliaceae</taxon>
        <taxon>Colwellia</taxon>
    </lineage>
</organism>
<reference key="1">
    <citation type="journal article" date="2005" name="Proc. Natl. Acad. Sci. U.S.A.">
        <title>The psychrophilic lifestyle as revealed by the genome sequence of Colwellia psychrerythraea 34H through genomic and proteomic analyses.</title>
        <authorList>
            <person name="Methe B.A."/>
            <person name="Nelson K.E."/>
            <person name="Deming J.W."/>
            <person name="Momen B."/>
            <person name="Melamud E."/>
            <person name="Zhang X."/>
            <person name="Moult J."/>
            <person name="Madupu R."/>
            <person name="Nelson W.C."/>
            <person name="Dodson R.J."/>
            <person name="Brinkac L.M."/>
            <person name="Daugherty S.C."/>
            <person name="Durkin A.S."/>
            <person name="DeBoy R.T."/>
            <person name="Kolonay J.F."/>
            <person name="Sullivan S.A."/>
            <person name="Zhou L."/>
            <person name="Davidsen T.M."/>
            <person name="Wu M."/>
            <person name="Huston A.L."/>
            <person name="Lewis M."/>
            <person name="Weaver B."/>
            <person name="Weidman J.F."/>
            <person name="Khouri H."/>
            <person name="Utterback T.R."/>
            <person name="Feldblyum T.V."/>
            <person name="Fraser C.M."/>
        </authorList>
    </citation>
    <scope>NUCLEOTIDE SEQUENCE [LARGE SCALE GENOMIC DNA]</scope>
    <source>
        <strain>34H / ATCC BAA-681</strain>
    </source>
</reference>
<accession>Q47VM6</accession>
<feature type="chain" id="PRO_0000289486" description="GTP cyclohydrolase FolE2">
    <location>
        <begin position="1"/>
        <end position="308"/>
    </location>
</feature>
<feature type="site" description="May be catalytically important" evidence="1">
    <location>
        <position position="155"/>
    </location>
</feature>
<dbReference type="EC" id="3.5.4.16" evidence="1"/>
<dbReference type="EMBL" id="CP000083">
    <property type="protein sequence ID" value="AAZ28290.1"/>
    <property type="molecule type" value="Genomic_DNA"/>
</dbReference>
<dbReference type="RefSeq" id="WP_011045227.1">
    <property type="nucleotide sequence ID" value="NC_003910.7"/>
</dbReference>
<dbReference type="SMR" id="Q47VM6"/>
<dbReference type="STRING" id="167879.CPS_4498"/>
<dbReference type="KEGG" id="cps:CPS_4498"/>
<dbReference type="eggNOG" id="COG1469">
    <property type="taxonomic scope" value="Bacteria"/>
</dbReference>
<dbReference type="HOGENOM" id="CLU_062816_0_0_6"/>
<dbReference type="UniPathway" id="UPA00848">
    <property type="reaction ID" value="UER00151"/>
</dbReference>
<dbReference type="Proteomes" id="UP000000547">
    <property type="component" value="Chromosome"/>
</dbReference>
<dbReference type="GO" id="GO:0003934">
    <property type="term" value="F:GTP cyclohydrolase I activity"/>
    <property type="evidence" value="ECO:0007669"/>
    <property type="project" value="UniProtKB-UniRule"/>
</dbReference>
<dbReference type="GO" id="GO:0046654">
    <property type="term" value="P:tetrahydrofolate biosynthetic process"/>
    <property type="evidence" value="ECO:0007669"/>
    <property type="project" value="UniProtKB-UniRule"/>
</dbReference>
<dbReference type="Gene3D" id="3.10.270.10">
    <property type="entry name" value="Urate Oxidase"/>
    <property type="match status" value="1"/>
</dbReference>
<dbReference type="HAMAP" id="MF_01527_B">
    <property type="entry name" value="GTP_cyclohydrol_B"/>
    <property type="match status" value="1"/>
</dbReference>
<dbReference type="InterPro" id="IPR022838">
    <property type="entry name" value="GTP_cyclohydrolase_FolE2"/>
</dbReference>
<dbReference type="InterPro" id="IPR003801">
    <property type="entry name" value="GTP_cyclohydrolase_FolE2/MptA"/>
</dbReference>
<dbReference type="NCBIfam" id="NF010200">
    <property type="entry name" value="PRK13674.1-1"/>
    <property type="match status" value="1"/>
</dbReference>
<dbReference type="PANTHER" id="PTHR36445">
    <property type="entry name" value="GTP CYCLOHYDROLASE MPTA"/>
    <property type="match status" value="1"/>
</dbReference>
<dbReference type="PANTHER" id="PTHR36445:SF1">
    <property type="entry name" value="GTP CYCLOHYDROLASE MPTA"/>
    <property type="match status" value="1"/>
</dbReference>
<dbReference type="Pfam" id="PF02649">
    <property type="entry name" value="GCHY-1"/>
    <property type="match status" value="1"/>
</dbReference>
<comment type="function">
    <text evidence="1">Converts GTP to 7,8-dihydroneopterin triphosphate.</text>
</comment>
<comment type="catalytic activity">
    <reaction evidence="1">
        <text>GTP + H2O = 7,8-dihydroneopterin 3'-triphosphate + formate + H(+)</text>
        <dbReference type="Rhea" id="RHEA:17473"/>
        <dbReference type="ChEBI" id="CHEBI:15377"/>
        <dbReference type="ChEBI" id="CHEBI:15378"/>
        <dbReference type="ChEBI" id="CHEBI:15740"/>
        <dbReference type="ChEBI" id="CHEBI:37565"/>
        <dbReference type="ChEBI" id="CHEBI:58462"/>
        <dbReference type="EC" id="3.5.4.16"/>
    </reaction>
</comment>
<comment type="pathway">
    <text evidence="1">Cofactor biosynthesis; 7,8-dihydroneopterin triphosphate biosynthesis; 7,8-dihydroneopterin triphosphate from GTP: step 1/1.</text>
</comment>
<comment type="similarity">
    <text evidence="1">Belongs to the GTP cyclohydrolase IV family.</text>
</comment>
<proteinExistence type="inferred from homology"/>
<sequence length="308" mass="34396">MTTSMPDIANHTTAQTEGTLDWVGMSNIEMPIMVASKGESERMVSAHIDAFVNLKDAQAKGIHMSRLYLLIDELSTSNILNYQSLVSLLDGFISSHQELSDQAKVQFCFDYHLRRKSLISGKEGWKAYPVTLTGNLNQGKLTIELTIDVPYSSTCPCSAALARQLIQKAFQDKFAQQSELALTDVHDWLGTTEGIVATPHSQRSVAEVKVKLNSSINDFPITEIVDLVENSLKTPVQAAVKREDEQEFARLNGQNLMFCEDAARRLQHSLNQTDQFDDFWLRINHLESLHAHDAVSVTTKGIKDGYQP</sequence>